<keyword id="KW-0963">Cytoplasm</keyword>
<keyword id="KW-0378">Hydrolase</keyword>
<comment type="catalytic activity">
    <reaction evidence="1">
        <text>urea + 2 H2O + H(+) = hydrogencarbonate + 2 NH4(+)</text>
        <dbReference type="Rhea" id="RHEA:20557"/>
        <dbReference type="ChEBI" id="CHEBI:15377"/>
        <dbReference type="ChEBI" id="CHEBI:15378"/>
        <dbReference type="ChEBI" id="CHEBI:16199"/>
        <dbReference type="ChEBI" id="CHEBI:17544"/>
        <dbReference type="ChEBI" id="CHEBI:28938"/>
        <dbReference type="EC" id="3.5.1.5"/>
    </reaction>
</comment>
<comment type="pathway">
    <text evidence="1">Nitrogen metabolism; urea degradation; CO(2) and NH(3) from urea (urease route): step 1/1.</text>
</comment>
<comment type="subunit">
    <text evidence="1">Heterotrimer of UreA (gamma), UreB (beta) and UreC (alpha) subunits. Three heterotrimers associate to form the active enzyme.</text>
</comment>
<comment type="subcellular location">
    <subcellularLocation>
        <location evidence="1">Cytoplasm</location>
    </subcellularLocation>
</comment>
<comment type="similarity">
    <text evidence="1">Belongs to the urease gamma subunit family.</text>
</comment>
<organism>
    <name type="scientific">Pseudomonas entomophila (strain L48)</name>
    <dbReference type="NCBI Taxonomy" id="384676"/>
    <lineage>
        <taxon>Bacteria</taxon>
        <taxon>Pseudomonadati</taxon>
        <taxon>Pseudomonadota</taxon>
        <taxon>Gammaproteobacteria</taxon>
        <taxon>Pseudomonadales</taxon>
        <taxon>Pseudomonadaceae</taxon>
        <taxon>Pseudomonas</taxon>
    </lineage>
</organism>
<feature type="chain" id="PRO_1000046354" description="Urease subunit gamma">
    <location>
        <begin position="1"/>
        <end position="100"/>
    </location>
</feature>
<evidence type="ECO:0000255" key="1">
    <source>
        <dbReference type="HAMAP-Rule" id="MF_00739"/>
    </source>
</evidence>
<protein>
    <recommendedName>
        <fullName evidence="1">Urease subunit gamma</fullName>
        <ecNumber evidence="1">3.5.1.5</ecNumber>
    </recommendedName>
    <alternativeName>
        <fullName evidence="1">Urea amidohydrolase subunit gamma</fullName>
    </alternativeName>
</protein>
<accession>Q1IBP2</accession>
<gene>
    <name evidence="1" type="primary">ureA</name>
    <name type="ordered locus">PSEEN2094</name>
</gene>
<dbReference type="EC" id="3.5.1.5" evidence="1"/>
<dbReference type="EMBL" id="CT573326">
    <property type="protein sequence ID" value="CAK14923.1"/>
    <property type="molecule type" value="Genomic_DNA"/>
</dbReference>
<dbReference type="RefSeq" id="WP_011533326.1">
    <property type="nucleotide sequence ID" value="NC_008027.1"/>
</dbReference>
<dbReference type="SMR" id="Q1IBP2"/>
<dbReference type="STRING" id="384676.PSEEN2094"/>
<dbReference type="GeneID" id="32805302"/>
<dbReference type="KEGG" id="pen:PSEEN2094"/>
<dbReference type="eggNOG" id="COG0831">
    <property type="taxonomic scope" value="Bacteria"/>
</dbReference>
<dbReference type="HOGENOM" id="CLU_145825_1_0_6"/>
<dbReference type="OrthoDB" id="9797217at2"/>
<dbReference type="UniPathway" id="UPA00258">
    <property type="reaction ID" value="UER00370"/>
</dbReference>
<dbReference type="Proteomes" id="UP000000658">
    <property type="component" value="Chromosome"/>
</dbReference>
<dbReference type="GO" id="GO:0005737">
    <property type="term" value="C:cytoplasm"/>
    <property type="evidence" value="ECO:0007669"/>
    <property type="project" value="UniProtKB-SubCell"/>
</dbReference>
<dbReference type="GO" id="GO:0016151">
    <property type="term" value="F:nickel cation binding"/>
    <property type="evidence" value="ECO:0007669"/>
    <property type="project" value="InterPro"/>
</dbReference>
<dbReference type="GO" id="GO:0009039">
    <property type="term" value="F:urease activity"/>
    <property type="evidence" value="ECO:0007669"/>
    <property type="project" value="UniProtKB-UniRule"/>
</dbReference>
<dbReference type="GO" id="GO:0043419">
    <property type="term" value="P:urea catabolic process"/>
    <property type="evidence" value="ECO:0007669"/>
    <property type="project" value="UniProtKB-UniRule"/>
</dbReference>
<dbReference type="CDD" id="cd00390">
    <property type="entry name" value="Urease_gamma"/>
    <property type="match status" value="1"/>
</dbReference>
<dbReference type="Gene3D" id="3.30.280.10">
    <property type="entry name" value="Urease, gamma-like subunit"/>
    <property type="match status" value="1"/>
</dbReference>
<dbReference type="HAMAP" id="MF_00739">
    <property type="entry name" value="Urease_gamma"/>
    <property type="match status" value="1"/>
</dbReference>
<dbReference type="InterPro" id="IPR012010">
    <property type="entry name" value="Urease_gamma"/>
</dbReference>
<dbReference type="InterPro" id="IPR002026">
    <property type="entry name" value="Urease_gamma/gamma-beta_su"/>
</dbReference>
<dbReference type="InterPro" id="IPR036463">
    <property type="entry name" value="Urease_gamma_sf"/>
</dbReference>
<dbReference type="InterPro" id="IPR050069">
    <property type="entry name" value="Urease_subunit"/>
</dbReference>
<dbReference type="NCBIfam" id="NF009712">
    <property type="entry name" value="PRK13241.1"/>
    <property type="match status" value="1"/>
</dbReference>
<dbReference type="NCBIfam" id="TIGR00193">
    <property type="entry name" value="urease_gam"/>
    <property type="match status" value="1"/>
</dbReference>
<dbReference type="PANTHER" id="PTHR33569">
    <property type="entry name" value="UREASE"/>
    <property type="match status" value="1"/>
</dbReference>
<dbReference type="PANTHER" id="PTHR33569:SF1">
    <property type="entry name" value="UREASE"/>
    <property type="match status" value="1"/>
</dbReference>
<dbReference type="Pfam" id="PF00547">
    <property type="entry name" value="Urease_gamma"/>
    <property type="match status" value="1"/>
</dbReference>
<dbReference type="PIRSF" id="PIRSF001223">
    <property type="entry name" value="Urease_gamma"/>
    <property type="match status" value="1"/>
</dbReference>
<dbReference type="SUPFAM" id="SSF54111">
    <property type="entry name" value="Urease, gamma-subunit"/>
    <property type="match status" value="1"/>
</dbReference>
<name>URE3_PSEE4</name>
<proteinExistence type="inferred from homology"/>
<reference key="1">
    <citation type="journal article" date="2006" name="Nat. Biotechnol.">
        <title>Complete genome sequence of the entomopathogenic and metabolically versatile soil bacterium Pseudomonas entomophila.</title>
        <authorList>
            <person name="Vodovar N."/>
            <person name="Vallenet D."/>
            <person name="Cruveiller S."/>
            <person name="Rouy Z."/>
            <person name="Barbe V."/>
            <person name="Acosta C."/>
            <person name="Cattolico L."/>
            <person name="Jubin C."/>
            <person name="Lajus A."/>
            <person name="Segurens B."/>
            <person name="Vacherie B."/>
            <person name="Wincker P."/>
            <person name="Weissenbach J."/>
            <person name="Lemaitre B."/>
            <person name="Medigue C."/>
            <person name="Boccard F."/>
        </authorList>
    </citation>
    <scope>NUCLEOTIDE SEQUENCE [LARGE SCALE GENOMIC DNA]</scope>
    <source>
        <strain>L48</strain>
    </source>
</reference>
<sequence length="100" mass="11034">MELTPREKDKLLLFTAALLAERRLARGLRLNYPEAVALISAAVLEGARDGRTVAELMSLGREVLVREQVMDGVPEMLHDVQVEATFPDGTKLVTVHDPIV</sequence>